<dbReference type="EMBL" id="EU926011">
    <property type="protein sequence ID" value="ACI41343.1"/>
    <property type="molecule type" value="mRNA"/>
</dbReference>
<dbReference type="EMBL" id="FM864015">
    <property type="protein sequence ID" value="CAS03613.1"/>
    <property type="molecule type" value="mRNA"/>
</dbReference>
<dbReference type="SMR" id="B6DCS7"/>
<dbReference type="ArachnoServer" id="AS000960">
    <property type="toxin name" value="U3-lycotoxin-Ls1p"/>
</dbReference>
<dbReference type="GO" id="GO:0005576">
    <property type="term" value="C:extracellular region"/>
    <property type="evidence" value="ECO:0007669"/>
    <property type="project" value="UniProtKB-SubCell"/>
</dbReference>
<dbReference type="GO" id="GO:0090729">
    <property type="term" value="F:toxin activity"/>
    <property type="evidence" value="ECO:0007669"/>
    <property type="project" value="UniProtKB-KW"/>
</dbReference>
<dbReference type="InterPro" id="IPR019553">
    <property type="entry name" value="Spider_toxin_CSTX_knottin"/>
</dbReference>
<dbReference type="InterPro" id="IPR011142">
    <property type="entry name" value="Spider_toxin_CSTX_Knottin_CS"/>
</dbReference>
<dbReference type="Pfam" id="PF10530">
    <property type="entry name" value="Toxin_35"/>
    <property type="match status" value="1"/>
</dbReference>
<dbReference type="PROSITE" id="PS60029">
    <property type="entry name" value="SPIDER_CSTX"/>
    <property type="match status" value="1"/>
</dbReference>
<reference key="1">
    <citation type="journal article" date="2010" name="Zoology">
        <title>Transcriptome analysis of the venom glands of the Chinese wolf spider Lycosa singoriensis.</title>
        <authorList>
            <person name="Zhang Y."/>
            <person name="Chen J."/>
            <person name="Tang X."/>
            <person name="Wang F."/>
            <person name="Jiang L."/>
            <person name="Xiong X."/>
            <person name="Wang M."/>
            <person name="Rong M."/>
            <person name="Liu Z."/>
            <person name="Liang S."/>
        </authorList>
    </citation>
    <scope>NUCLEOTIDE SEQUENCE [LARGE SCALE MRNA]</scope>
    <source>
        <tissue>Venom gland</tissue>
    </source>
</reference>
<sequence>MKFVLLFGVLLVTLFSYSSAEMFDDFDQADEDELLSLIEKEEARAEECTPRFYDCSHDRHSCCRSELFKDVCTCFYPEGGDNEVCTCQQPKHLKYMEKAAGKAKKFGGKIKKWFG</sequence>
<keyword id="KW-1015">Disulfide bond</keyword>
<keyword id="KW-0960">Knottin</keyword>
<keyword id="KW-0964">Secreted</keyword>
<keyword id="KW-0732">Signal</keyword>
<keyword id="KW-0800">Toxin</keyword>
<accession>B6DCS7</accession>
<comment type="subcellular location">
    <subcellularLocation>
        <location evidence="1">Secreted</location>
    </subcellularLocation>
</comment>
<comment type="tissue specificity">
    <text>Expressed by the venom gland.</text>
</comment>
<comment type="domain">
    <text evidence="1">The presence of a 'disulfide through disulfide knot' structurally defines this protein as a knottin.</text>
</comment>
<comment type="similarity">
    <text evidence="3">Belongs to the neurotoxin 19 (CSTX) family. 01 subfamily.</text>
</comment>
<feature type="signal peptide" evidence="2">
    <location>
        <begin position="1"/>
        <end position="20"/>
    </location>
</feature>
<feature type="propeptide" id="PRO_0000401667" evidence="1">
    <location>
        <begin position="21"/>
        <end position="44"/>
    </location>
</feature>
<feature type="chain" id="PRO_0000401668" description="U3-lycotoxin-Ls1p">
    <location>
        <begin position="45"/>
        <end position="115"/>
    </location>
</feature>
<feature type="disulfide bond" evidence="1">
    <location>
        <begin position="48"/>
        <end position="63"/>
    </location>
</feature>
<feature type="disulfide bond" evidence="1">
    <location>
        <begin position="55"/>
        <end position="72"/>
    </location>
</feature>
<feature type="disulfide bond" evidence="1">
    <location>
        <begin position="62"/>
        <end position="87"/>
    </location>
</feature>
<feature type="disulfide bond" evidence="1">
    <location>
        <begin position="74"/>
        <end position="85"/>
    </location>
</feature>
<evidence type="ECO:0000250" key="1"/>
<evidence type="ECO:0000255" key="2"/>
<evidence type="ECO:0000305" key="3"/>
<proteinExistence type="evidence at transcript level"/>
<organism>
    <name type="scientific">Lycosa singoriensis</name>
    <name type="common">Wolf spider</name>
    <name type="synonym">Aranea singoriensis</name>
    <dbReference type="NCBI Taxonomy" id="434756"/>
    <lineage>
        <taxon>Eukaryota</taxon>
        <taxon>Metazoa</taxon>
        <taxon>Ecdysozoa</taxon>
        <taxon>Arthropoda</taxon>
        <taxon>Chelicerata</taxon>
        <taxon>Arachnida</taxon>
        <taxon>Araneae</taxon>
        <taxon>Araneomorphae</taxon>
        <taxon>Entelegynae</taxon>
        <taxon>Lycosoidea</taxon>
        <taxon>Lycosidae</taxon>
        <taxon>Lycosa</taxon>
    </lineage>
</organism>
<protein>
    <recommendedName>
        <fullName>U3-lycotoxin-Ls1p</fullName>
    </recommendedName>
    <alternativeName>
        <fullName>Toxin-like structure LSTX-B32</fullName>
    </alternativeName>
</protein>
<name>TX332_LYCSI</name>